<comment type="function">
    <text evidence="1">Acts as a chaperone.</text>
</comment>
<comment type="induction">
    <text evidence="1">By stress conditions e.g. heat shock.</text>
</comment>
<comment type="similarity">
    <text evidence="1">Belongs to the heat shock protein 70 family.</text>
</comment>
<sequence length="635" mass="68475">MGKIIGIDLGTTNSCVAVMDGDKPRVIENAEGERTTPSIIAYTNDNETLVGQPAKRQAVTNPKNTLFAIKRLIGRRFEDQEVQRDVAIMPFEITKADNGDAWVSVKGEKMAPPQISAEVLKKMKKTAEDFLGETVTEAVITVPAYFNDAQRQATKDAGRIAGLEVKRIINEPTAAALAYGLDKGKGNQTIAVYDLGGGTFDLSIIEIDEVGGEKTFEVLATNGDTHLGGEDFDNRVINYLVDEFKKEQGVDLRNDPLAMQRLKEAGEKAKIELSSAQQTDVNLPYITADATGPKHLNIKLTRAKLEALVEDLVARSMEPVKVALSDAGLSVSEINDVILVGGQTRMPLVQQKVAEFFGKEPRRDVNPDEAVAIGAAVQGGVLAGDVKDVLLLDVTPLSLGIETMGGVMTTLIEKNTTIPTKKSQVFSTAEDNQSAVTIHVLQGERKQASANKSLGQFNLEGINPAPRGMPQIEVTFDIDADGIIHVSAKDKGTGKEQKITIKASSGLSDEEIQQMVRDAEANAEADRKFEELVQARNQADHLVHSTRKQLAEVGEKLSAEDKAPIESAVNELETAAKGEDKTEIDAKVQALIQVSEKLLQASQQQAQADAGAQQSQSTKGGDDVVDAEFEEVKDK</sequence>
<reference key="1">
    <citation type="journal article" date="2007" name="J. Bacteriol.">
        <title>Complete genome sequence of Haemophilus somnus (Histophilus somni) strain 129Pt and comparison to Haemophilus ducreyi 35000HP and Haemophilus influenzae Rd.</title>
        <authorList>
            <person name="Challacombe J.F."/>
            <person name="Duncan A.J."/>
            <person name="Brettin T.S."/>
            <person name="Bruce D."/>
            <person name="Chertkov O."/>
            <person name="Detter J.C."/>
            <person name="Han C.S."/>
            <person name="Misra M."/>
            <person name="Richardson P."/>
            <person name="Tapia R."/>
            <person name="Thayer N."/>
            <person name="Xie G."/>
            <person name="Inzana T.J."/>
        </authorList>
    </citation>
    <scope>NUCLEOTIDE SEQUENCE [LARGE SCALE GENOMIC DNA]</scope>
    <source>
        <strain>129Pt</strain>
    </source>
</reference>
<name>DNAK_HISS1</name>
<organism>
    <name type="scientific">Histophilus somni (strain 129Pt)</name>
    <name type="common">Haemophilus somnus</name>
    <dbReference type="NCBI Taxonomy" id="205914"/>
    <lineage>
        <taxon>Bacteria</taxon>
        <taxon>Pseudomonadati</taxon>
        <taxon>Pseudomonadota</taxon>
        <taxon>Gammaproteobacteria</taxon>
        <taxon>Pasteurellales</taxon>
        <taxon>Pasteurellaceae</taxon>
        <taxon>Histophilus</taxon>
    </lineage>
</organism>
<evidence type="ECO:0000255" key="1">
    <source>
        <dbReference type="HAMAP-Rule" id="MF_00332"/>
    </source>
</evidence>
<evidence type="ECO:0000256" key="2">
    <source>
        <dbReference type="SAM" id="MobiDB-lite"/>
    </source>
</evidence>
<protein>
    <recommendedName>
        <fullName evidence="1">Chaperone protein DnaK</fullName>
    </recommendedName>
    <alternativeName>
        <fullName evidence="1">HSP70</fullName>
    </alternativeName>
    <alternativeName>
        <fullName evidence="1">Heat shock 70 kDa protein</fullName>
    </alternativeName>
    <alternativeName>
        <fullName evidence="1">Heat shock protein 70</fullName>
    </alternativeName>
</protein>
<feature type="chain" id="PRO_1000059573" description="Chaperone protein DnaK">
    <location>
        <begin position="1"/>
        <end position="635"/>
    </location>
</feature>
<feature type="region of interest" description="Disordered" evidence="2">
    <location>
        <begin position="600"/>
        <end position="635"/>
    </location>
</feature>
<feature type="compositionally biased region" description="Low complexity" evidence="2">
    <location>
        <begin position="600"/>
        <end position="617"/>
    </location>
</feature>
<feature type="modified residue" description="Phosphothreonine; by autocatalysis" evidence="1">
    <location>
        <position position="199"/>
    </location>
</feature>
<accession>Q0I3V2</accession>
<keyword id="KW-0067">ATP-binding</keyword>
<keyword id="KW-0143">Chaperone</keyword>
<keyword id="KW-0547">Nucleotide-binding</keyword>
<keyword id="KW-0597">Phosphoprotein</keyword>
<keyword id="KW-0346">Stress response</keyword>
<dbReference type="EMBL" id="CP000436">
    <property type="protein sequence ID" value="ABI25469.1"/>
    <property type="molecule type" value="Genomic_DNA"/>
</dbReference>
<dbReference type="SMR" id="Q0I3V2"/>
<dbReference type="KEGG" id="hso:HS_1194"/>
<dbReference type="eggNOG" id="COG0443">
    <property type="taxonomic scope" value="Bacteria"/>
</dbReference>
<dbReference type="HOGENOM" id="CLU_005965_2_1_6"/>
<dbReference type="GO" id="GO:0005524">
    <property type="term" value="F:ATP binding"/>
    <property type="evidence" value="ECO:0007669"/>
    <property type="project" value="UniProtKB-UniRule"/>
</dbReference>
<dbReference type="GO" id="GO:0140662">
    <property type="term" value="F:ATP-dependent protein folding chaperone"/>
    <property type="evidence" value="ECO:0007669"/>
    <property type="project" value="InterPro"/>
</dbReference>
<dbReference type="GO" id="GO:0051082">
    <property type="term" value="F:unfolded protein binding"/>
    <property type="evidence" value="ECO:0007669"/>
    <property type="project" value="InterPro"/>
</dbReference>
<dbReference type="CDD" id="cd10234">
    <property type="entry name" value="ASKHA_NBD_HSP70_DnaK-like"/>
    <property type="match status" value="1"/>
</dbReference>
<dbReference type="FunFam" id="2.60.34.10:FF:000014">
    <property type="entry name" value="Chaperone protein DnaK HSP70"/>
    <property type="match status" value="1"/>
</dbReference>
<dbReference type="FunFam" id="1.20.1270.10:FF:000001">
    <property type="entry name" value="Molecular chaperone DnaK"/>
    <property type="match status" value="1"/>
</dbReference>
<dbReference type="FunFam" id="3.30.420.40:FF:000004">
    <property type="entry name" value="Molecular chaperone DnaK"/>
    <property type="match status" value="1"/>
</dbReference>
<dbReference type="FunFam" id="3.90.640.10:FF:000003">
    <property type="entry name" value="Molecular chaperone DnaK"/>
    <property type="match status" value="1"/>
</dbReference>
<dbReference type="Gene3D" id="1.20.1270.10">
    <property type="match status" value="1"/>
</dbReference>
<dbReference type="Gene3D" id="3.30.420.40">
    <property type="match status" value="2"/>
</dbReference>
<dbReference type="Gene3D" id="3.90.640.10">
    <property type="entry name" value="Actin, Chain A, domain 4"/>
    <property type="match status" value="1"/>
</dbReference>
<dbReference type="Gene3D" id="2.60.34.10">
    <property type="entry name" value="Substrate Binding Domain Of DNAk, Chain A, domain 1"/>
    <property type="match status" value="1"/>
</dbReference>
<dbReference type="HAMAP" id="MF_00332">
    <property type="entry name" value="DnaK"/>
    <property type="match status" value="1"/>
</dbReference>
<dbReference type="InterPro" id="IPR043129">
    <property type="entry name" value="ATPase_NBD"/>
</dbReference>
<dbReference type="InterPro" id="IPR012725">
    <property type="entry name" value="Chaperone_DnaK"/>
</dbReference>
<dbReference type="InterPro" id="IPR018181">
    <property type="entry name" value="Heat_shock_70_CS"/>
</dbReference>
<dbReference type="InterPro" id="IPR029048">
    <property type="entry name" value="HSP70_C_sf"/>
</dbReference>
<dbReference type="InterPro" id="IPR029047">
    <property type="entry name" value="HSP70_peptide-bd_sf"/>
</dbReference>
<dbReference type="InterPro" id="IPR013126">
    <property type="entry name" value="Hsp_70_fam"/>
</dbReference>
<dbReference type="NCBIfam" id="NF001413">
    <property type="entry name" value="PRK00290.1"/>
    <property type="match status" value="1"/>
</dbReference>
<dbReference type="NCBIfam" id="NF003520">
    <property type="entry name" value="PRK05183.1"/>
    <property type="match status" value="1"/>
</dbReference>
<dbReference type="NCBIfam" id="TIGR02350">
    <property type="entry name" value="prok_dnaK"/>
    <property type="match status" value="1"/>
</dbReference>
<dbReference type="PANTHER" id="PTHR19375">
    <property type="entry name" value="HEAT SHOCK PROTEIN 70KDA"/>
    <property type="match status" value="1"/>
</dbReference>
<dbReference type="Pfam" id="PF00012">
    <property type="entry name" value="HSP70"/>
    <property type="match status" value="1"/>
</dbReference>
<dbReference type="PRINTS" id="PR00301">
    <property type="entry name" value="HEATSHOCK70"/>
</dbReference>
<dbReference type="SUPFAM" id="SSF53067">
    <property type="entry name" value="Actin-like ATPase domain"/>
    <property type="match status" value="2"/>
</dbReference>
<dbReference type="SUPFAM" id="SSF100934">
    <property type="entry name" value="Heat shock protein 70kD (HSP70), C-terminal subdomain"/>
    <property type="match status" value="1"/>
</dbReference>
<dbReference type="SUPFAM" id="SSF100920">
    <property type="entry name" value="Heat shock protein 70kD (HSP70), peptide-binding domain"/>
    <property type="match status" value="1"/>
</dbReference>
<dbReference type="PROSITE" id="PS00297">
    <property type="entry name" value="HSP70_1"/>
    <property type="match status" value="1"/>
</dbReference>
<dbReference type="PROSITE" id="PS00329">
    <property type="entry name" value="HSP70_2"/>
    <property type="match status" value="1"/>
</dbReference>
<dbReference type="PROSITE" id="PS01036">
    <property type="entry name" value="HSP70_3"/>
    <property type="match status" value="1"/>
</dbReference>
<proteinExistence type="inferred from homology"/>
<gene>
    <name evidence="1" type="primary">dnaK</name>
    <name type="ordered locus">HS_1194</name>
</gene>